<proteinExistence type="evidence at protein level"/>
<name>TTHAT_LUPAN</name>
<accession>A0A4P1QUJ3</accession>
<accession>E5RUB1</accession>
<reference key="1">
    <citation type="submission" date="2010-08" db="EMBL/GenBank/DDBJ databases">
        <title>Identification of an acyltransferase-like gene LaAT by differential gene expression between quinolizidine alkaloid-producing and nonproducing cultivars of Lupinus angustifolius.</title>
        <authorList>
            <person name="Bunsupa S."/>
            <person name="Okada T."/>
            <person name="Yamazaki M."/>
            <person name="Saito K."/>
        </authorList>
    </citation>
    <scope>NUCLEOTIDE SEQUENCE [MRNA]</scope>
</reference>
<reference key="2">
    <citation type="journal article" date="2017" name="Plant Biotechnol. J.">
        <title>A comprehensive draft genome sequence for lupin (Lupinus angustifolius), an emerging health food: insights into plant-microbe interactions and legume evolution.</title>
        <authorList>
            <person name="Hane J.K."/>
            <person name="Ming Y."/>
            <person name="Kamphuis L.G."/>
            <person name="Nelson M.N."/>
            <person name="Garg G."/>
            <person name="Atkins C.A."/>
            <person name="Bayer P.E."/>
            <person name="Bravo A."/>
            <person name="Bringans S."/>
            <person name="Cannon S."/>
            <person name="Edwards D."/>
            <person name="Foley R."/>
            <person name="Gao L.L."/>
            <person name="Harrison M.J."/>
            <person name="Huang W."/>
            <person name="Hurgobin B."/>
            <person name="Li S."/>
            <person name="Liu C.W."/>
            <person name="McGrath A."/>
            <person name="Morahan G."/>
            <person name="Murray J."/>
            <person name="Weller J."/>
            <person name="Jian J."/>
            <person name="Singh K.B."/>
        </authorList>
    </citation>
    <scope>NUCLEOTIDE SEQUENCE [LARGE SCALE GENOMIC DNA]</scope>
    <source>
        <strain>cv. Tanjil</strain>
        <tissue>Seedling</tissue>
    </source>
</reference>
<reference key="3">
    <citation type="journal article" date="2023" name="Sci. Adv.">
        <title>The causal mutation leading to sweetness in modern white lupin cultivars.</title>
        <authorList>
            <person name="Mancinotti D."/>
            <person name="Czepiel K."/>
            <person name="Taylor J.L."/>
            <person name="Golshadi Galehshahi H."/>
            <person name="Moeller L.A."/>
            <person name="Jensen M.K."/>
            <person name="Motawia M.S."/>
            <person name="Hufnagel B."/>
            <person name="Soriano A."/>
            <person name="Yeheyis L."/>
            <person name="Kjaerulff L."/>
            <person name="Peret B."/>
            <person name="Staerk D."/>
            <person name="Wendt T."/>
            <person name="Nelson M.N."/>
            <person name="Kroc M."/>
            <person name="Geu-Flores F."/>
        </authorList>
    </citation>
    <scope>FUNCTION</scope>
    <scope>DISRUPTION PHENOTYPE</scope>
    <scope>CATALYTIC ACTIVITY</scope>
    <scope>BIOTECHNOLOGY</scope>
    <scope>PATHWAY</scope>
</reference>
<gene>
    <name evidence="7" type="ORF">TanjilG_21586</name>
</gene>
<comment type="function">
    <text evidence="3">Tetrahydroanabasine acetyltransferase involved in the accumulation of quinolizidine type antinutritional alkaloids (QAs) (PubMed:37540741). QAs impart a bitter taste to plants, acting as repellents and toxicants for herbivores and predators, and possess a variety of pharmacological effects, including sedative, anticonvulsant, anti-inflammatory, antiviral, antitumor, antipyretic, anti-hepatitis B, antifibrotic, antiallergic, antidiarrheal, analgesic and antimicrobial activities (PubMed:37540741). Mediates the conversion of tetrahydroanabasine into ammodendrine (PubMed:37540741).</text>
</comment>
<comment type="catalytic activity">
    <reaction evidence="3">
        <text>tetrahydroanabasine + acetyl-CoA = ammodendrine + CoA</text>
        <dbReference type="Rhea" id="RHEA:77475"/>
        <dbReference type="ChEBI" id="CHEBI:57287"/>
        <dbReference type="ChEBI" id="CHEBI:57288"/>
        <dbReference type="ChEBI" id="CHEBI:197286"/>
        <dbReference type="ChEBI" id="CHEBI:197287"/>
    </reaction>
    <physiologicalReaction direction="left-to-right" evidence="3">
        <dbReference type="Rhea" id="RHEA:77476"/>
    </physiologicalReaction>
</comment>
<comment type="pathway">
    <text evidence="3">Alkaloid biosynthesis.</text>
</comment>
<comment type="subunit">
    <text evidence="2">Monomer.</text>
</comment>
<comment type="disruption phenotype">
    <text evidence="3">Foliar and seeds sweetness associated with the accumulation of quinolizidine alkaloids (QAs) pathway intermediates and their derivatives, but lost production of quinolizidine type antinutritional alkaloids.</text>
</comment>
<comment type="biotechnology">
    <text evidence="3">Disrupting the production of quinolizidine type antinutritional alkaloids (QAs) by selecting inactive tetrahydroanabasine acetyltransferase variants is a potential kick-start for the domestication of novel legume crops.</text>
</comment>
<comment type="similarity">
    <text evidence="6">Belongs to the plant acyltransferase family.</text>
</comment>
<comment type="sequence caution" evidence="6">
    <conflict type="erroneous initiation">
        <sequence resource="EMBL-CDS" id="OIV95196"/>
    </conflict>
    <text>Truncated N-terminus.</text>
</comment>
<protein>
    <recommendedName>
        <fullName evidence="4">Tetrahydroanabasine acetyltransferase</fullName>
        <ecNumber evidence="3">2.3.1.-</ecNumber>
    </recommendedName>
    <alternativeName>
        <fullName evidence="5">Acyltransferase</fullName>
        <shortName evidence="5">LaAT</shortName>
    </alternativeName>
</protein>
<dbReference type="EC" id="2.3.1.-" evidence="3"/>
<dbReference type="EMBL" id="AB581532">
    <property type="protein sequence ID" value="BAJ49867.1"/>
    <property type="molecule type" value="mRNA"/>
</dbReference>
<dbReference type="EMBL" id="CM007376">
    <property type="protein sequence ID" value="OIV95196.1"/>
    <property type="status" value="ALT_INIT"/>
    <property type="molecule type" value="Genomic_DNA"/>
</dbReference>
<dbReference type="SMR" id="A0A4P1QUJ3"/>
<dbReference type="STRING" id="3871.A0A4P1QUJ3"/>
<dbReference type="KEGG" id="lang:109328823"/>
<dbReference type="Proteomes" id="UP000188354">
    <property type="component" value="Chromosome LG16"/>
</dbReference>
<dbReference type="GO" id="GO:0016407">
    <property type="term" value="F:acetyltransferase activity"/>
    <property type="evidence" value="ECO:0000315"/>
    <property type="project" value="UniProtKB"/>
</dbReference>
<dbReference type="GO" id="GO:0009821">
    <property type="term" value="P:alkaloid biosynthetic process"/>
    <property type="evidence" value="ECO:0000315"/>
    <property type="project" value="UniProtKB"/>
</dbReference>
<dbReference type="Gene3D" id="3.30.559.10">
    <property type="entry name" value="Chloramphenicol acetyltransferase-like domain"/>
    <property type="match status" value="2"/>
</dbReference>
<dbReference type="InterPro" id="IPR023213">
    <property type="entry name" value="CAT-like_dom_sf"/>
</dbReference>
<dbReference type="InterPro" id="IPR050898">
    <property type="entry name" value="Plant_acyltransferase"/>
</dbReference>
<dbReference type="PANTHER" id="PTHR31147">
    <property type="entry name" value="ACYL TRANSFERASE 4"/>
    <property type="match status" value="1"/>
</dbReference>
<dbReference type="PANTHER" id="PTHR31147:SF25">
    <property type="entry name" value="HXXXD-TYPE ACYL-TRANSFERASE FAMILY PROTEIN"/>
    <property type="match status" value="1"/>
</dbReference>
<dbReference type="Pfam" id="PF02458">
    <property type="entry name" value="Transferase"/>
    <property type="match status" value="1"/>
</dbReference>
<feature type="chain" id="PRO_0000460285" description="Tetrahydroanabasine acetyltransferase">
    <location>
        <begin position="1"/>
        <end position="453"/>
    </location>
</feature>
<feature type="active site" description="Proton acceptor" evidence="1">
    <location>
        <position position="163"/>
    </location>
</feature>
<feature type="active site" description="Proton acceptor" evidence="1">
    <location>
        <position position="388"/>
    </location>
</feature>
<feature type="sequence conflict" description="In Ref. 1; BAJ49867." evidence="6" ref="1">
    <original>N</original>
    <variation>H</variation>
    <location>
        <position position="96"/>
    </location>
</feature>
<evidence type="ECO:0000250" key="1">
    <source>
        <dbReference type="UniProtKB" id="Q70PR7"/>
    </source>
</evidence>
<evidence type="ECO:0000250" key="2">
    <source>
        <dbReference type="UniProtKB" id="Q9M6E2"/>
    </source>
</evidence>
<evidence type="ECO:0000269" key="3">
    <source>
    </source>
</evidence>
<evidence type="ECO:0000303" key="4">
    <source>
    </source>
</evidence>
<evidence type="ECO:0000303" key="5">
    <source ref="1"/>
</evidence>
<evidence type="ECO:0000305" key="6"/>
<evidence type="ECO:0000312" key="7">
    <source>
        <dbReference type="EMBL" id="OIV95196.1"/>
    </source>
</evidence>
<sequence>MAYQMASLKLEMNEVVHVKPSKPTPSIVLPLSTLDHRPYPDSIWPIVHVYRSASNGKLDPAFVLKQALSKALVYYYPLAGKLVKQPDGKVAINCNNDGVPFLEAIANCNLSSLNYLDDHDILIAKQLVFDLHLQDENEYPHPVSFKLTKFQCGGFTIGMSTSHIVCDGWGACQFFRAIVELASGKSEPFVKPVWERERLIGSITTQPMPNPMDEATAAVSPFLPATDVMYELFKVDKESIRRLKMSLMKEISGNETMEQGFTSFESLAAYVWRSRARALNLNNEGKTLLVFSVQVRQHMSPPLSDGYYGTAITEGQVVLTMKELNEKPLSDIVKLVKESKNIAFTGDFIKNTIDTLESNPENFNVEEGPGATLALSDWKHLGFMPNVDFGWKEPINMVPAPCNMFEYEGLCIFLSPSKYDPSMEGGVRVFISLPSVAMPKFREEMEALKVTTP</sequence>
<organism>
    <name type="scientific">Lupinus angustifolius</name>
    <name type="common">Narrow-leaved blue lupine</name>
    <dbReference type="NCBI Taxonomy" id="3871"/>
    <lineage>
        <taxon>Eukaryota</taxon>
        <taxon>Viridiplantae</taxon>
        <taxon>Streptophyta</taxon>
        <taxon>Embryophyta</taxon>
        <taxon>Tracheophyta</taxon>
        <taxon>Spermatophyta</taxon>
        <taxon>Magnoliopsida</taxon>
        <taxon>eudicotyledons</taxon>
        <taxon>Gunneridae</taxon>
        <taxon>Pentapetalae</taxon>
        <taxon>rosids</taxon>
        <taxon>fabids</taxon>
        <taxon>Fabales</taxon>
        <taxon>Fabaceae</taxon>
        <taxon>Papilionoideae</taxon>
        <taxon>50 kb inversion clade</taxon>
        <taxon>genistoids sensu lato</taxon>
        <taxon>core genistoids</taxon>
        <taxon>Genisteae</taxon>
        <taxon>Lupinus</taxon>
    </lineage>
</organism>
<keyword id="KW-0012">Acyltransferase</keyword>
<keyword id="KW-0017">Alkaloid metabolism</keyword>
<keyword id="KW-1185">Reference proteome</keyword>
<keyword id="KW-0808">Transferase</keyword>